<dbReference type="EC" id="1.4.1.3" evidence="3"/>
<dbReference type="PIR" id="A00380">
    <property type="entry name" value="DECHE"/>
</dbReference>
<dbReference type="FunCoup" id="P00368">
    <property type="interactions" value="891"/>
</dbReference>
<dbReference type="STRING" id="9031.ENSGALP00000043514"/>
<dbReference type="GlyGen" id="P00368">
    <property type="glycosylation" value="2 sites"/>
</dbReference>
<dbReference type="PaxDb" id="9031-ENSGALP00000003139"/>
<dbReference type="VEuPathDB" id="HostDB:geneid_423612"/>
<dbReference type="eggNOG" id="KOG2250">
    <property type="taxonomic scope" value="Eukaryota"/>
</dbReference>
<dbReference type="InParanoid" id="P00368"/>
<dbReference type="PhylomeDB" id="P00368"/>
<dbReference type="Proteomes" id="UP000000539">
    <property type="component" value="Unassembled WGS sequence"/>
</dbReference>
<dbReference type="GO" id="GO:0005783">
    <property type="term" value="C:endoplasmic reticulum"/>
    <property type="evidence" value="ECO:0000250"/>
    <property type="project" value="UniProtKB"/>
</dbReference>
<dbReference type="GO" id="GO:0005739">
    <property type="term" value="C:mitochondrion"/>
    <property type="evidence" value="ECO:0000250"/>
    <property type="project" value="UniProtKB"/>
</dbReference>
<dbReference type="GO" id="GO:0005524">
    <property type="term" value="F:ATP binding"/>
    <property type="evidence" value="ECO:0007669"/>
    <property type="project" value="UniProtKB-KW"/>
</dbReference>
<dbReference type="GO" id="GO:0004352">
    <property type="term" value="F:glutamate dehydrogenase (NAD+) activity"/>
    <property type="evidence" value="ECO:0000318"/>
    <property type="project" value="GO_Central"/>
</dbReference>
<dbReference type="GO" id="GO:0004354">
    <property type="term" value="F:glutamate dehydrogenase (NADP+) activity"/>
    <property type="evidence" value="ECO:0007669"/>
    <property type="project" value="RHEA"/>
</dbReference>
<dbReference type="GO" id="GO:0004353">
    <property type="term" value="F:glutamate dehydrogenase [NAD(P)+] activity"/>
    <property type="evidence" value="ECO:0000250"/>
    <property type="project" value="UniProtKB"/>
</dbReference>
<dbReference type="GO" id="GO:0005525">
    <property type="term" value="F:GTP binding"/>
    <property type="evidence" value="ECO:0007669"/>
    <property type="project" value="UniProtKB-KW"/>
</dbReference>
<dbReference type="GO" id="GO:0006538">
    <property type="term" value="P:glutamate catabolic process"/>
    <property type="evidence" value="ECO:0000318"/>
    <property type="project" value="GO_Central"/>
</dbReference>
<dbReference type="GO" id="GO:0006541">
    <property type="term" value="P:glutamine metabolic process"/>
    <property type="evidence" value="ECO:0000250"/>
    <property type="project" value="UniProtKB"/>
</dbReference>
<dbReference type="GO" id="GO:0072350">
    <property type="term" value="P:tricarboxylic acid metabolic process"/>
    <property type="evidence" value="ECO:0000250"/>
    <property type="project" value="UniProtKB"/>
</dbReference>
<dbReference type="CDD" id="cd01076">
    <property type="entry name" value="NAD_bind_1_Glu_DH"/>
    <property type="match status" value="1"/>
</dbReference>
<dbReference type="FunFam" id="1.10.287.140:FF:000001">
    <property type="entry name" value="Glutamate dehydrogenase 1, mitochondrial"/>
    <property type="match status" value="1"/>
</dbReference>
<dbReference type="FunFam" id="3.40.50.10860:FF:000007">
    <property type="entry name" value="Glutamate dehydrogenase 1, mitochondrial"/>
    <property type="match status" value="1"/>
</dbReference>
<dbReference type="FunFam" id="3.40.50.720:FF:000100">
    <property type="entry name" value="Glutamate dehydrogenase 1, mitochondrial"/>
    <property type="match status" value="1"/>
</dbReference>
<dbReference type="Gene3D" id="1.10.287.140">
    <property type="match status" value="1"/>
</dbReference>
<dbReference type="Gene3D" id="3.40.50.10860">
    <property type="entry name" value="Leucine Dehydrogenase, chain A, domain 1"/>
    <property type="match status" value="1"/>
</dbReference>
<dbReference type="Gene3D" id="3.40.50.720">
    <property type="entry name" value="NAD(P)-binding Rossmann-like Domain"/>
    <property type="match status" value="1"/>
</dbReference>
<dbReference type="InterPro" id="IPR046346">
    <property type="entry name" value="Aminoacid_DH-like_N_sf"/>
</dbReference>
<dbReference type="InterPro" id="IPR006095">
    <property type="entry name" value="Glu/Leu/Phe/Val/Trp_DH"/>
</dbReference>
<dbReference type="InterPro" id="IPR006096">
    <property type="entry name" value="Glu/Leu/Phe/Val/Trp_DH_C"/>
</dbReference>
<dbReference type="InterPro" id="IPR006097">
    <property type="entry name" value="Glu/Leu/Phe/Val/Trp_DH_dimer"/>
</dbReference>
<dbReference type="InterPro" id="IPR033524">
    <property type="entry name" value="Glu/Leu/Phe/Val_DH_AS"/>
</dbReference>
<dbReference type="InterPro" id="IPR014362">
    <property type="entry name" value="Glu_DH"/>
</dbReference>
<dbReference type="InterPro" id="IPR036291">
    <property type="entry name" value="NAD(P)-bd_dom_sf"/>
</dbReference>
<dbReference type="InterPro" id="IPR033922">
    <property type="entry name" value="NAD_bind_Glu_DH"/>
</dbReference>
<dbReference type="PANTHER" id="PTHR11606">
    <property type="entry name" value="GLUTAMATE DEHYDROGENASE"/>
    <property type="match status" value="1"/>
</dbReference>
<dbReference type="PANTHER" id="PTHR11606:SF13">
    <property type="entry name" value="GLUTAMATE DEHYDROGENASE 1, MITOCHONDRIAL"/>
    <property type="match status" value="1"/>
</dbReference>
<dbReference type="Pfam" id="PF00208">
    <property type="entry name" value="ELFV_dehydrog"/>
    <property type="match status" value="1"/>
</dbReference>
<dbReference type="Pfam" id="PF02812">
    <property type="entry name" value="ELFV_dehydrog_N"/>
    <property type="match status" value="1"/>
</dbReference>
<dbReference type="PIRSF" id="PIRSF000185">
    <property type="entry name" value="Glu_DH"/>
    <property type="match status" value="1"/>
</dbReference>
<dbReference type="PRINTS" id="PR00082">
    <property type="entry name" value="GLFDHDRGNASE"/>
</dbReference>
<dbReference type="SMART" id="SM00839">
    <property type="entry name" value="ELFV_dehydrog"/>
    <property type="match status" value="1"/>
</dbReference>
<dbReference type="SUPFAM" id="SSF53223">
    <property type="entry name" value="Aminoacid dehydrogenase-like, N-terminal domain"/>
    <property type="match status" value="1"/>
</dbReference>
<dbReference type="SUPFAM" id="SSF51735">
    <property type="entry name" value="NAD(P)-binding Rossmann-fold domains"/>
    <property type="match status" value="1"/>
</dbReference>
<dbReference type="PROSITE" id="PS00074">
    <property type="entry name" value="GLFV_DEHYDROGENASE"/>
    <property type="match status" value="1"/>
</dbReference>
<keyword id="KW-0067">ATP-binding</keyword>
<keyword id="KW-0903">Direct protein sequencing</keyword>
<keyword id="KW-0256">Endoplasmic reticulum</keyword>
<keyword id="KW-0342">GTP-binding</keyword>
<keyword id="KW-0496">Mitochondrion</keyword>
<keyword id="KW-0521">NADP</keyword>
<keyword id="KW-0547">Nucleotide-binding</keyword>
<keyword id="KW-0560">Oxidoreductase</keyword>
<keyword id="KW-1185">Reference proteome</keyword>
<protein>
    <recommendedName>
        <fullName>Glutamate dehydrogenase 1, mitochondrial</fullName>
        <shortName>GDH 1</shortName>
        <ecNumber evidence="3">1.4.1.3</ecNumber>
    </recommendedName>
</protein>
<reference key="1">
    <citation type="journal article" date="1973" name="J. Biol. Chem.">
        <title>Amino acd sequence of chicken liver glutamate dehydrogenase.</title>
        <authorList>
            <person name="Moon K."/>
            <person name="Piszkiewicz D."/>
            <person name="Smith E.L."/>
        </authorList>
    </citation>
    <scope>PROTEIN SEQUENCE</scope>
    <source>
        <tissue>Liver</tissue>
    </source>
</reference>
<gene>
    <name type="primary">GLUD1</name>
    <name type="synonym">GLUD</name>
</gene>
<organism>
    <name type="scientific">Gallus gallus</name>
    <name type="common">Chicken</name>
    <dbReference type="NCBI Taxonomy" id="9031"/>
    <lineage>
        <taxon>Eukaryota</taxon>
        <taxon>Metazoa</taxon>
        <taxon>Chordata</taxon>
        <taxon>Craniata</taxon>
        <taxon>Vertebrata</taxon>
        <taxon>Euteleostomi</taxon>
        <taxon>Archelosauria</taxon>
        <taxon>Archosauria</taxon>
        <taxon>Dinosauria</taxon>
        <taxon>Saurischia</taxon>
        <taxon>Theropoda</taxon>
        <taxon>Coelurosauria</taxon>
        <taxon>Aves</taxon>
        <taxon>Neognathae</taxon>
        <taxon>Galloanserae</taxon>
        <taxon>Galliformes</taxon>
        <taxon>Phasianidae</taxon>
        <taxon>Phasianinae</taxon>
        <taxon>Gallus</taxon>
    </lineage>
</organism>
<feature type="chain" id="PRO_0000182742" description="Glutamate dehydrogenase 1, mitochondrial">
    <location>
        <begin position="1" status="less than"/>
        <end position="503"/>
    </location>
</feature>
<feature type="active site" evidence="4">
    <location>
        <position position="129"/>
    </location>
</feature>
<feature type="binding site" evidence="1">
    <location>
        <begin position="87"/>
        <end position="89"/>
    </location>
    <ligand>
        <name>NAD(+)</name>
        <dbReference type="ChEBI" id="CHEBI:57540"/>
    </ligand>
</feature>
<feature type="binding site" evidence="2">
    <location>
        <position position="93"/>
    </location>
    <ligand>
        <name>substrate</name>
    </ligand>
</feature>
<feature type="binding site" evidence="2">
    <location>
        <position position="117"/>
    </location>
    <ligand>
        <name>substrate</name>
    </ligand>
</feature>
<feature type="binding site" evidence="2">
    <location>
        <position position="122"/>
    </location>
    <ligand>
        <name>NAD(+)</name>
        <dbReference type="ChEBI" id="CHEBI:57540"/>
    </ligand>
</feature>
<feature type="binding site" evidence="2">
    <location>
        <position position="198"/>
    </location>
    <ligand>
        <name>NAD(+)</name>
        <dbReference type="ChEBI" id="CHEBI:57540"/>
    </ligand>
</feature>
<feature type="binding site" evidence="2">
    <location>
        <position position="212"/>
    </location>
    <ligand>
        <name>GTP</name>
        <dbReference type="ChEBI" id="CHEBI:37565"/>
    </ligand>
</feature>
<feature type="binding site" evidence="2">
    <location>
        <position position="216"/>
    </location>
    <ligand>
        <name>GTP</name>
        <dbReference type="ChEBI" id="CHEBI:37565"/>
    </ligand>
</feature>
<feature type="binding site" evidence="2">
    <location>
        <position position="265"/>
    </location>
    <ligand>
        <name>GTP</name>
        <dbReference type="ChEBI" id="CHEBI:37565"/>
    </ligand>
</feature>
<feature type="binding site" evidence="2">
    <location>
        <position position="268"/>
    </location>
    <ligand>
        <name>GTP</name>
        <dbReference type="ChEBI" id="CHEBI:37565"/>
    </ligand>
</feature>
<feature type="binding site" evidence="2">
    <location>
        <position position="384"/>
    </location>
    <ligand>
        <name>substrate</name>
    </ligand>
</feature>
<feature type="binding site" evidence="2">
    <location>
        <position position="389"/>
    </location>
    <ligand>
        <name>NAD(+)</name>
        <dbReference type="ChEBI" id="CHEBI:57540"/>
    </ligand>
</feature>
<feature type="binding site" evidence="2">
    <location>
        <position position="395"/>
    </location>
    <ligand>
        <name>ADP</name>
        <dbReference type="ChEBI" id="CHEBI:456216"/>
    </ligand>
</feature>
<feature type="binding site" evidence="2">
    <location>
        <position position="461"/>
    </location>
    <ligand>
        <name>ADP</name>
        <dbReference type="ChEBI" id="CHEBI:456216"/>
    </ligand>
</feature>
<feature type="non-terminal residue">
    <location>
        <position position="1"/>
    </location>
</feature>
<proteinExistence type="evidence at protein level"/>
<accession>P00368</accession>
<name>DHE3_CHICK</name>
<evidence type="ECO:0000250" key="1"/>
<evidence type="ECO:0000250" key="2">
    <source>
        <dbReference type="UniProtKB" id="P00366"/>
    </source>
</evidence>
<evidence type="ECO:0000250" key="3">
    <source>
        <dbReference type="UniProtKB" id="P00367"/>
    </source>
</evidence>
<evidence type="ECO:0000255" key="4">
    <source>
        <dbReference type="PROSITE-ProRule" id="PRU10011"/>
    </source>
</evidence>
<evidence type="ECO:0000305" key="5"/>
<comment type="function">
    <text evidence="3">Mitochondrial glutamate dehydrogenase that converts L-glutamate into alpha-ketoglutarate. Plays a key role in glutamine anaplerosis by producing alpha-ketoglutarate, an important intermediate in the tricarboxylic acid cycle.</text>
</comment>
<comment type="catalytic activity">
    <reaction evidence="3">
        <text>L-glutamate + NAD(+) + H2O = 2-oxoglutarate + NH4(+) + NADH + H(+)</text>
        <dbReference type="Rhea" id="RHEA:15133"/>
        <dbReference type="ChEBI" id="CHEBI:15377"/>
        <dbReference type="ChEBI" id="CHEBI:15378"/>
        <dbReference type="ChEBI" id="CHEBI:16810"/>
        <dbReference type="ChEBI" id="CHEBI:28938"/>
        <dbReference type="ChEBI" id="CHEBI:29985"/>
        <dbReference type="ChEBI" id="CHEBI:57540"/>
        <dbReference type="ChEBI" id="CHEBI:57945"/>
        <dbReference type="EC" id="1.4.1.3"/>
    </reaction>
</comment>
<comment type="catalytic activity">
    <reaction evidence="3">
        <text>L-glutamate + NADP(+) + H2O = 2-oxoglutarate + NH4(+) + NADPH + H(+)</text>
        <dbReference type="Rhea" id="RHEA:11612"/>
        <dbReference type="ChEBI" id="CHEBI:15377"/>
        <dbReference type="ChEBI" id="CHEBI:15378"/>
        <dbReference type="ChEBI" id="CHEBI:16810"/>
        <dbReference type="ChEBI" id="CHEBI:28938"/>
        <dbReference type="ChEBI" id="CHEBI:29985"/>
        <dbReference type="ChEBI" id="CHEBI:57783"/>
        <dbReference type="ChEBI" id="CHEBI:58349"/>
        <dbReference type="EC" id="1.4.1.3"/>
    </reaction>
</comment>
<comment type="activity regulation">
    <text evidence="1 3">Subject to allosteric regulation. Activated by ADP. Inhibited by GTP and ATP.</text>
</comment>
<comment type="subunit">
    <text evidence="2">Homohexamer.</text>
</comment>
<comment type="subcellular location">
    <subcellularLocation>
        <location evidence="3">Mitochondrion</location>
    </subcellularLocation>
    <subcellularLocation>
        <location evidence="3">Endoplasmic reticulum</location>
    </subcellularLocation>
</comment>
<comment type="similarity">
    <text evidence="5">Belongs to the Glu/Leu/Phe/Val dehydrogenases family.</text>
</comment>
<sequence length="503" mass="55712">CZAADKEDDPNFFKMVEGFFDRGASIVEDKLVEGLRTRQSMEQRRHRVRGILRIIKPCNHVLSVSFPIKRDDGZWEVIEGYRAQHSHQRTPCKGGIRYSLDVSVDEVKALASLMTYKCAVVDVPFGGAKAGVKINPKNYTDEDLEKITRRFTMELAKKGFIGPGVDVPAPNMSTGEREMSWIADTYASTIGHYDINAHACVTKPGISQGGIHGRISATGRGLFGHIENFIENASYMSILGMTPGFGDKTFAVQGFGNVGLHSMRYLHRFGAKCVAVGEFDGSIWNPDGIDPKELEDYKLQHGTIMGFPKAQKLEGSILETDCDILIPAASEKQLTKANAHKVKAKIIAEGANGPTTPQADKIFLERNIMVIPDLYLNAGGVTVSAFZZKNLNHVSYGRLTFKYERDSNYHLLMSVQESLERKFGKHGGTIPVVPTAEFQDRISGASEKDIVHSGLAYTMERSARQIMRTAMKYNLGLDLRTAAYVNAIEKVFKVYNEAGLTFT</sequence>